<accession>C0Q2V9</accession>
<dbReference type="EC" id="3.6.4.13" evidence="1"/>
<dbReference type="EMBL" id="CP000857">
    <property type="protein sequence ID" value="ACN48095.1"/>
    <property type="molecule type" value="Genomic_DNA"/>
</dbReference>
<dbReference type="RefSeq" id="WP_000047525.1">
    <property type="nucleotide sequence ID" value="NC_012125.1"/>
</dbReference>
<dbReference type="SMR" id="C0Q2V9"/>
<dbReference type="KEGG" id="sei:SPC_4028"/>
<dbReference type="HOGENOM" id="CLU_003041_1_3_6"/>
<dbReference type="Proteomes" id="UP000001599">
    <property type="component" value="Chromosome"/>
</dbReference>
<dbReference type="GO" id="GO:0005829">
    <property type="term" value="C:cytosol"/>
    <property type="evidence" value="ECO:0007669"/>
    <property type="project" value="TreeGrafter"/>
</dbReference>
<dbReference type="GO" id="GO:0005524">
    <property type="term" value="F:ATP binding"/>
    <property type="evidence" value="ECO:0007669"/>
    <property type="project" value="UniProtKB-UniRule"/>
</dbReference>
<dbReference type="GO" id="GO:0016887">
    <property type="term" value="F:ATP hydrolysis activity"/>
    <property type="evidence" value="ECO:0007669"/>
    <property type="project" value="RHEA"/>
</dbReference>
<dbReference type="GO" id="GO:0003723">
    <property type="term" value="F:RNA binding"/>
    <property type="evidence" value="ECO:0007669"/>
    <property type="project" value="UniProtKB-UniRule"/>
</dbReference>
<dbReference type="GO" id="GO:0003724">
    <property type="term" value="F:RNA helicase activity"/>
    <property type="evidence" value="ECO:0007669"/>
    <property type="project" value="UniProtKB-UniRule"/>
</dbReference>
<dbReference type="GO" id="GO:0006401">
    <property type="term" value="P:RNA catabolic process"/>
    <property type="evidence" value="ECO:0007669"/>
    <property type="project" value="UniProtKB-UniRule"/>
</dbReference>
<dbReference type="CDD" id="cd00268">
    <property type="entry name" value="DEADc"/>
    <property type="match status" value="1"/>
</dbReference>
<dbReference type="CDD" id="cd18787">
    <property type="entry name" value="SF2_C_DEAD"/>
    <property type="match status" value="1"/>
</dbReference>
<dbReference type="FunFam" id="3.40.50.300:FF:000008">
    <property type="entry name" value="ATP-dependent RNA helicase RhlB"/>
    <property type="match status" value="1"/>
</dbReference>
<dbReference type="FunFam" id="3.40.50.300:FF:000312">
    <property type="entry name" value="ATP-dependent RNA helicase RhlB"/>
    <property type="match status" value="1"/>
</dbReference>
<dbReference type="Gene3D" id="3.40.50.300">
    <property type="entry name" value="P-loop containing nucleotide triphosphate hydrolases"/>
    <property type="match status" value="2"/>
</dbReference>
<dbReference type="HAMAP" id="MF_00661">
    <property type="entry name" value="DEAD_helicase_RhlB"/>
    <property type="match status" value="1"/>
</dbReference>
<dbReference type="InterPro" id="IPR011545">
    <property type="entry name" value="DEAD/DEAH_box_helicase_dom"/>
</dbReference>
<dbReference type="InterPro" id="IPR050079">
    <property type="entry name" value="DEAD_box_RNA_helicase"/>
</dbReference>
<dbReference type="InterPro" id="IPR014001">
    <property type="entry name" value="Helicase_ATP-bd"/>
</dbReference>
<dbReference type="InterPro" id="IPR001650">
    <property type="entry name" value="Helicase_C-like"/>
</dbReference>
<dbReference type="InterPro" id="IPR027417">
    <property type="entry name" value="P-loop_NTPase"/>
</dbReference>
<dbReference type="InterPro" id="IPR000629">
    <property type="entry name" value="RNA-helicase_DEAD-box_CS"/>
</dbReference>
<dbReference type="InterPro" id="IPR023554">
    <property type="entry name" value="RNA_helicase_ATP-dep_RhlB"/>
</dbReference>
<dbReference type="InterPro" id="IPR014014">
    <property type="entry name" value="RNA_helicase_DEAD_Q_motif"/>
</dbReference>
<dbReference type="NCBIfam" id="NF003419">
    <property type="entry name" value="PRK04837.1"/>
    <property type="match status" value="1"/>
</dbReference>
<dbReference type="PANTHER" id="PTHR47959:SF10">
    <property type="entry name" value="ATP-DEPENDENT RNA HELICASE RHLB"/>
    <property type="match status" value="1"/>
</dbReference>
<dbReference type="PANTHER" id="PTHR47959">
    <property type="entry name" value="ATP-DEPENDENT RNA HELICASE RHLE-RELATED"/>
    <property type="match status" value="1"/>
</dbReference>
<dbReference type="Pfam" id="PF00270">
    <property type="entry name" value="DEAD"/>
    <property type="match status" value="1"/>
</dbReference>
<dbReference type="Pfam" id="PF00271">
    <property type="entry name" value="Helicase_C"/>
    <property type="match status" value="1"/>
</dbReference>
<dbReference type="SMART" id="SM00487">
    <property type="entry name" value="DEXDc"/>
    <property type="match status" value="1"/>
</dbReference>
<dbReference type="SMART" id="SM00490">
    <property type="entry name" value="HELICc"/>
    <property type="match status" value="1"/>
</dbReference>
<dbReference type="SUPFAM" id="SSF52540">
    <property type="entry name" value="P-loop containing nucleoside triphosphate hydrolases"/>
    <property type="match status" value="1"/>
</dbReference>
<dbReference type="PROSITE" id="PS00039">
    <property type="entry name" value="DEAD_ATP_HELICASE"/>
    <property type="match status" value="1"/>
</dbReference>
<dbReference type="PROSITE" id="PS51192">
    <property type="entry name" value="HELICASE_ATP_BIND_1"/>
    <property type="match status" value="1"/>
</dbReference>
<dbReference type="PROSITE" id="PS51194">
    <property type="entry name" value="HELICASE_CTER"/>
    <property type="match status" value="1"/>
</dbReference>
<dbReference type="PROSITE" id="PS51195">
    <property type="entry name" value="Q_MOTIF"/>
    <property type="match status" value="1"/>
</dbReference>
<evidence type="ECO:0000255" key="1">
    <source>
        <dbReference type="HAMAP-Rule" id="MF_00661"/>
    </source>
</evidence>
<evidence type="ECO:0000256" key="2">
    <source>
        <dbReference type="SAM" id="MobiDB-lite"/>
    </source>
</evidence>
<feature type="chain" id="PRO_1000147583" description="ATP-dependent RNA helicase RhlB">
    <location>
        <begin position="1"/>
        <end position="421"/>
    </location>
</feature>
<feature type="domain" description="Helicase ATP-binding" evidence="1">
    <location>
        <begin position="40"/>
        <end position="219"/>
    </location>
</feature>
<feature type="domain" description="Helicase C-terminal" evidence="1">
    <location>
        <begin position="245"/>
        <end position="390"/>
    </location>
</feature>
<feature type="region of interest" description="Disordered" evidence="2">
    <location>
        <begin position="396"/>
        <end position="421"/>
    </location>
</feature>
<feature type="short sequence motif" description="Q motif">
    <location>
        <begin position="9"/>
        <end position="37"/>
    </location>
</feature>
<feature type="short sequence motif" description="DEAD box">
    <location>
        <begin position="165"/>
        <end position="168"/>
    </location>
</feature>
<feature type="compositionally biased region" description="Low complexity" evidence="2">
    <location>
        <begin position="402"/>
        <end position="414"/>
    </location>
</feature>
<feature type="binding site" evidence="1">
    <location>
        <begin position="53"/>
        <end position="60"/>
    </location>
    <ligand>
        <name>ATP</name>
        <dbReference type="ChEBI" id="CHEBI:30616"/>
    </ligand>
</feature>
<proteinExistence type="inferred from homology"/>
<organism>
    <name type="scientific">Salmonella paratyphi C (strain RKS4594)</name>
    <dbReference type="NCBI Taxonomy" id="476213"/>
    <lineage>
        <taxon>Bacteria</taxon>
        <taxon>Pseudomonadati</taxon>
        <taxon>Pseudomonadota</taxon>
        <taxon>Gammaproteobacteria</taxon>
        <taxon>Enterobacterales</taxon>
        <taxon>Enterobacteriaceae</taxon>
        <taxon>Salmonella</taxon>
    </lineage>
</organism>
<comment type="function">
    <text evidence="1">DEAD-box RNA helicase involved in RNA degradation. Has RNA-dependent ATPase activity and unwinds double-stranded RNA.</text>
</comment>
<comment type="catalytic activity">
    <reaction evidence="1">
        <text>ATP + H2O = ADP + phosphate + H(+)</text>
        <dbReference type="Rhea" id="RHEA:13065"/>
        <dbReference type="ChEBI" id="CHEBI:15377"/>
        <dbReference type="ChEBI" id="CHEBI:15378"/>
        <dbReference type="ChEBI" id="CHEBI:30616"/>
        <dbReference type="ChEBI" id="CHEBI:43474"/>
        <dbReference type="ChEBI" id="CHEBI:456216"/>
        <dbReference type="EC" id="3.6.4.13"/>
    </reaction>
</comment>
<comment type="subunit">
    <text evidence="1">Component of the RNA degradosome, which is a multiprotein complex involved in RNA processing and mRNA degradation.</text>
</comment>
<comment type="subcellular location">
    <subcellularLocation>
        <location evidence="1">Cytoplasm</location>
    </subcellularLocation>
</comment>
<comment type="similarity">
    <text evidence="1">Belongs to the DEAD box helicase family. RhlB subfamily.</text>
</comment>
<gene>
    <name evidence="1" type="primary">rhlB</name>
    <name type="ordered locus">SPC_4028</name>
</gene>
<keyword id="KW-0067">ATP-binding</keyword>
<keyword id="KW-0963">Cytoplasm</keyword>
<keyword id="KW-0347">Helicase</keyword>
<keyword id="KW-0378">Hydrolase</keyword>
<keyword id="KW-0547">Nucleotide-binding</keyword>
<keyword id="KW-0694">RNA-binding</keyword>
<name>RHLB_SALPC</name>
<sequence length="421" mass="47093">MSKTHLTEQKFSDFALHPQVVEALEKKGFYNCTPIQALALPLTLAGRDVAGQAQTGTGKTMAFLTSTFHYLLSHPAIDDRKVNQPRALIMAPTRELAVQIHADAEPLAQATGLKLGLAYGGDGYDKQLKVLESGVDILIGTTGRLIDYAKQNHINLGAIQVVVLDEADRMYDLGFIKDIRWLFRRMPPAAQRLNMLFSATLSYRVRELAFEQMNNAEYVEVEPEQKTGHRIKEELFYPSNEEKMRLLQTLIEEEWPDRAIIFANTKHRCEDIWGHLAADGHRVGLLTGDVAQKKRLRILDEFTRGDLDILVATDVAARGLHIPAVTHVFNYDLPDDCEDYVHRIGRTGRAGASGHSISLACEEYALNLPAIESYIGHSIPVSKYNPEALMNDLPKPLRLTRSRPGNGPRRAGAPRNRRRSG</sequence>
<protein>
    <recommendedName>
        <fullName evidence="1">ATP-dependent RNA helicase RhlB</fullName>
        <ecNumber evidence="1">3.6.4.13</ecNumber>
    </recommendedName>
</protein>
<reference key="1">
    <citation type="journal article" date="2009" name="PLoS ONE">
        <title>Salmonella paratyphi C: genetic divergence from Salmonella choleraesuis and pathogenic convergence with Salmonella typhi.</title>
        <authorList>
            <person name="Liu W.-Q."/>
            <person name="Feng Y."/>
            <person name="Wang Y."/>
            <person name="Zou Q.-H."/>
            <person name="Chen F."/>
            <person name="Guo J.-T."/>
            <person name="Peng Y.-H."/>
            <person name="Jin Y."/>
            <person name="Li Y.-G."/>
            <person name="Hu S.-N."/>
            <person name="Johnston R.N."/>
            <person name="Liu G.-R."/>
            <person name="Liu S.-L."/>
        </authorList>
    </citation>
    <scope>NUCLEOTIDE SEQUENCE [LARGE SCALE GENOMIC DNA]</scope>
    <source>
        <strain>RKS4594</strain>
    </source>
</reference>